<name>SRALN_PONAB</name>
<gene>
    <name type="primary">ARLN</name>
</gene>
<proteinExistence type="inferred from homology"/>
<evidence type="ECO:0000250" key="1">
    <source>
        <dbReference type="UniProtKB" id="Q8WVX3"/>
    </source>
</evidence>
<evidence type="ECO:0000250" key="2">
    <source>
        <dbReference type="UniProtKB" id="Q99M08"/>
    </source>
</evidence>
<evidence type="ECO:0000255" key="3"/>
<evidence type="ECO:0000256" key="4">
    <source>
        <dbReference type="SAM" id="MobiDB-lite"/>
    </source>
</evidence>
<evidence type="ECO:0000305" key="5"/>
<reference key="1">
    <citation type="submission" date="2004-11" db="EMBL/GenBank/DDBJ databases">
        <authorList>
            <consortium name="The German cDNA consortium"/>
        </authorList>
    </citation>
    <scope>NUCLEOTIDE SEQUENCE [LARGE SCALE MRNA]</scope>
    <source>
        <tissue>Brain cortex</tissue>
    </source>
</reference>
<organism>
    <name type="scientific">Pongo abelii</name>
    <name type="common">Sumatran orangutan</name>
    <name type="synonym">Pongo pygmaeus abelii</name>
    <dbReference type="NCBI Taxonomy" id="9601"/>
    <lineage>
        <taxon>Eukaryota</taxon>
        <taxon>Metazoa</taxon>
        <taxon>Chordata</taxon>
        <taxon>Craniata</taxon>
        <taxon>Vertebrata</taxon>
        <taxon>Euteleostomi</taxon>
        <taxon>Mammalia</taxon>
        <taxon>Eutheria</taxon>
        <taxon>Euarchontoglires</taxon>
        <taxon>Primates</taxon>
        <taxon>Haplorrhini</taxon>
        <taxon>Catarrhini</taxon>
        <taxon>Hominidae</taxon>
        <taxon>Pongo</taxon>
    </lineage>
</organism>
<accession>Q5R4B0</accession>
<comment type="function">
    <text evidence="2">Inhibits the activity of the calcium ATPases ATP2A2/SERCA2 and ATP2A3/SERCA3 by decreasing their apparent affinity for Ca(2+).</text>
</comment>
<comment type="subunit">
    <text evidence="1 2">Homooligomer. Can also form heterooligomers with other sarcoplasmic/endoplasmic reticulum calcium ATPase (SERCA) regulators ERLN, PLN, SLN and STRIT1/DWORF. Monomer. Interacts as a monomer with ATP2A2/SERCA2; the interaction results in inhibition of ATP2A2 Ca(2+) affinity.</text>
</comment>
<comment type="subcellular location">
    <subcellularLocation>
        <location evidence="2">Endoplasmic reticulum membrane</location>
        <topology evidence="3">Single-pass membrane protein</topology>
    </subcellularLocation>
</comment>
<sequence length="66" mass="7598">MEVDVPGVDGRDGLRERRGLSEGGRQNLDVRPQSGANGLPKHSYWLDLWLFIFFDVVVFLFVYFLP</sequence>
<protein>
    <recommendedName>
        <fullName evidence="5">Sarcoplasmic/endoplasmic reticulum calcium ATPase regulator ARLN</fullName>
        <shortName evidence="5">SERCA regulator ARLN</shortName>
    </recommendedName>
    <alternativeName>
        <fullName evidence="1">Allregulin</fullName>
    </alternativeName>
    <alternativeName>
        <fullName evidence="2">Another-regulin</fullName>
        <shortName evidence="2">ALN</shortName>
    </alternativeName>
</protein>
<dbReference type="EMBL" id="CR861345">
    <property type="protein sequence ID" value="CAH93406.1"/>
    <property type="molecule type" value="mRNA"/>
</dbReference>
<dbReference type="RefSeq" id="NP_001126864.1">
    <property type="nucleotide sequence ID" value="NM_001133392.2"/>
</dbReference>
<dbReference type="RefSeq" id="NP_001128908.1">
    <property type="nucleotide sequence ID" value="NM_001135436.1"/>
</dbReference>
<dbReference type="SMR" id="Q5R4B0"/>
<dbReference type="FunCoup" id="Q5R4B0">
    <property type="interactions" value="25"/>
</dbReference>
<dbReference type="GeneID" id="100173873"/>
<dbReference type="KEGG" id="pon:100173873"/>
<dbReference type="CTD" id="401152"/>
<dbReference type="eggNOG" id="ENOG502T0GP">
    <property type="taxonomic scope" value="Eukaryota"/>
</dbReference>
<dbReference type="HOGENOM" id="CLU_189559_0_0_1"/>
<dbReference type="InParanoid" id="Q5R4B0"/>
<dbReference type="TreeFam" id="TF343305"/>
<dbReference type="Proteomes" id="UP000001595">
    <property type="component" value="Chromosome 4"/>
</dbReference>
<dbReference type="GO" id="GO:0005789">
    <property type="term" value="C:endoplasmic reticulum membrane"/>
    <property type="evidence" value="ECO:0007669"/>
    <property type="project" value="UniProtKB-SubCell"/>
</dbReference>
<dbReference type="InterPro" id="IPR038780">
    <property type="entry name" value="ALN"/>
</dbReference>
<dbReference type="PANTHER" id="PTHR37367">
    <property type="entry name" value="CHROMOSOME 4 OPEN READING FRAME 3"/>
    <property type="match status" value="1"/>
</dbReference>
<dbReference type="PANTHER" id="PTHR37367:SF1">
    <property type="entry name" value="CHROMOSOME 4 OPEN READING FRAME 3"/>
    <property type="match status" value="1"/>
</dbReference>
<dbReference type="Pfam" id="PF17696">
    <property type="entry name" value="ALN"/>
    <property type="match status" value="1"/>
</dbReference>
<keyword id="KW-0007">Acetylation</keyword>
<keyword id="KW-0256">Endoplasmic reticulum</keyword>
<keyword id="KW-0472">Membrane</keyword>
<keyword id="KW-1185">Reference proteome</keyword>
<keyword id="KW-0812">Transmembrane</keyword>
<keyword id="KW-1133">Transmembrane helix</keyword>
<feature type="chain" id="PRO_0000325786" description="Sarcoplasmic/endoplasmic reticulum calcium ATPase regulator ARLN">
    <location>
        <begin position="1"/>
        <end position="66"/>
    </location>
</feature>
<feature type="transmembrane region" description="Helical" evidence="3">
    <location>
        <begin position="45"/>
        <end position="65"/>
    </location>
</feature>
<feature type="region of interest" description="Disordered" evidence="4">
    <location>
        <begin position="1"/>
        <end position="38"/>
    </location>
</feature>
<feature type="compositionally biased region" description="Basic and acidic residues" evidence="4">
    <location>
        <begin position="9"/>
        <end position="20"/>
    </location>
</feature>
<feature type="modified residue" description="N-acetylmethionine" evidence="1">
    <location>
        <position position="1"/>
    </location>
</feature>